<gene>
    <name evidence="1" type="primary">rnt</name>
    <name type="ordered locus">XCV1611</name>
</gene>
<name>RNT_XANE5</name>
<dbReference type="EC" id="3.1.13.-" evidence="1"/>
<dbReference type="EMBL" id="AM039952">
    <property type="protein sequence ID" value="CAJ23268.1"/>
    <property type="molecule type" value="Genomic_DNA"/>
</dbReference>
<dbReference type="RefSeq" id="WP_008572178.1">
    <property type="nucleotide sequence ID" value="NZ_CP017190.1"/>
</dbReference>
<dbReference type="SMR" id="Q3BV71"/>
<dbReference type="STRING" id="456327.BJD11_14540"/>
<dbReference type="GeneID" id="97509948"/>
<dbReference type="KEGG" id="xcv:XCV1611"/>
<dbReference type="eggNOG" id="COG0847">
    <property type="taxonomic scope" value="Bacteria"/>
</dbReference>
<dbReference type="HOGENOM" id="CLU_082724_0_0_6"/>
<dbReference type="Proteomes" id="UP000007069">
    <property type="component" value="Chromosome"/>
</dbReference>
<dbReference type="GO" id="GO:0005829">
    <property type="term" value="C:cytosol"/>
    <property type="evidence" value="ECO:0007669"/>
    <property type="project" value="TreeGrafter"/>
</dbReference>
<dbReference type="GO" id="GO:0008408">
    <property type="term" value="F:3'-5' exonuclease activity"/>
    <property type="evidence" value="ECO:0007669"/>
    <property type="project" value="TreeGrafter"/>
</dbReference>
<dbReference type="GO" id="GO:0000287">
    <property type="term" value="F:magnesium ion binding"/>
    <property type="evidence" value="ECO:0007669"/>
    <property type="project" value="UniProtKB-UniRule"/>
</dbReference>
<dbReference type="GO" id="GO:0003676">
    <property type="term" value="F:nucleic acid binding"/>
    <property type="evidence" value="ECO:0007669"/>
    <property type="project" value="InterPro"/>
</dbReference>
<dbReference type="GO" id="GO:0016896">
    <property type="term" value="F:RNA exonuclease activity, producing 5'-phosphomonoesters"/>
    <property type="evidence" value="ECO:0007669"/>
    <property type="project" value="UniProtKB-UniRule"/>
</dbReference>
<dbReference type="GO" id="GO:0045004">
    <property type="term" value="P:DNA replication proofreading"/>
    <property type="evidence" value="ECO:0007669"/>
    <property type="project" value="TreeGrafter"/>
</dbReference>
<dbReference type="GO" id="GO:0008033">
    <property type="term" value="P:tRNA processing"/>
    <property type="evidence" value="ECO:0007669"/>
    <property type="project" value="UniProtKB-KW"/>
</dbReference>
<dbReference type="CDD" id="cd06134">
    <property type="entry name" value="RNaseT"/>
    <property type="match status" value="1"/>
</dbReference>
<dbReference type="FunFam" id="3.30.420.10:FF:000009">
    <property type="entry name" value="Ribonuclease T"/>
    <property type="match status" value="1"/>
</dbReference>
<dbReference type="Gene3D" id="3.30.420.10">
    <property type="entry name" value="Ribonuclease H-like superfamily/Ribonuclease H"/>
    <property type="match status" value="1"/>
</dbReference>
<dbReference type="HAMAP" id="MF_00157">
    <property type="entry name" value="RNase_T"/>
    <property type="match status" value="1"/>
</dbReference>
<dbReference type="InterPro" id="IPR013520">
    <property type="entry name" value="Exonuclease_RNaseT/DNA_pol3"/>
</dbReference>
<dbReference type="InterPro" id="IPR005987">
    <property type="entry name" value="RNase_T"/>
</dbReference>
<dbReference type="InterPro" id="IPR012337">
    <property type="entry name" value="RNaseH-like_sf"/>
</dbReference>
<dbReference type="InterPro" id="IPR036397">
    <property type="entry name" value="RNaseH_sf"/>
</dbReference>
<dbReference type="NCBIfam" id="TIGR01298">
    <property type="entry name" value="RNaseT"/>
    <property type="match status" value="1"/>
</dbReference>
<dbReference type="PANTHER" id="PTHR30231">
    <property type="entry name" value="DNA POLYMERASE III SUBUNIT EPSILON"/>
    <property type="match status" value="1"/>
</dbReference>
<dbReference type="PANTHER" id="PTHR30231:SF2">
    <property type="entry name" value="RIBONUCLEASE T"/>
    <property type="match status" value="1"/>
</dbReference>
<dbReference type="Pfam" id="PF00929">
    <property type="entry name" value="RNase_T"/>
    <property type="match status" value="1"/>
</dbReference>
<dbReference type="SMART" id="SM00479">
    <property type="entry name" value="EXOIII"/>
    <property type="match status" value="1"/>
</dbReference>
<dbReference type="SUPFAM" id="SSF53098">
    <property type="entry name" value="Ribonuclease H-like"/>
    <property type="match status" value="1"/>
</dbReference>
<reference key="1">
    <citation type="journal article" date="2005" name="J. Bacteriol.">
        <title>Insights into genome plasticity and pathogenicity of the plant pathogenic Bacterium Xanthomonas campestris pv. vesicatoria revealed by the complete genome sequence.</title>
        <authorList>
            <person name="Thieme F."/>
            <person name="Koebnik R."/>
            <person name="Bekel T."/>
            <person name="Berger C."/>
            <person name="Boch J."/>
            <person name="Buettner D."/>
            <person name="Caldana C."/>
            <person name="Gaigalat L."/>
            <person name="Goesmann A."/>
            <person name="Kay S."/>
            <person name="Kirchner O."/>
            <person name="Lanz C."/>
            <person name="Linke B."/>
            <person name="McHardy A.C."/>
            <person name="Meyer F."/>
            <person name="Mittenhuber G."/>
            <person name="Nies D.H."/>
            <person name="Niesbach-Kloesgen U."/>
            <person name="Patschkowski T."/>
            <person name="Rueckert C."/>
            <person name="Rupp O."/>
            <person name="Schneiker S."/>
            <person name="Schuster S.C."/>
            <person name="Vorhoelter F.J."/>
            <person name="Weber E."/>
            <person name="Puehler A."/>
            <person name="Bonas U."/>
            <person name="Bartels D."/>
            <person name="Kaiser O."/>
        </authorList>
    </citation>
    <scope>NUCLEOTIDE SEQUENCE [LARGE SCALE GENOMIC DNA]</scope>
    <source>
        <strain>85-10</strain>
    </source>
</reference>
<protein>
    <recommendedName>
        <fullName evidence="1">Ribonuclease T</fullName>
        <ecNumber evidence="1">3.1.13.-</ecNumber>
    </recommendedName>
    <alternativeName>
        <fullName evidence="1">Exoribonuclease T</fullName>
        <shortName evidence="1">RNase T</shortName>
    </alternativeName>
</protein>
<comment type="function">
    <text evidence="1">Trims short 3' overhangs of a variety of RNA species, leaving a one or two nucleotide 3' overhang. Responsible for the end-turnover of tRNA: specifically removes the terminal AMP residue from uncharged tRNA (tRNA-C-C-A). Also appears to be involved in tRNA biosynthesis.</text>
</comment>
<comment type="cofactor">
    <cofactor evidence="1">
        <name>Mg(2+)</name>
        <dbReference type="ChEBI" id="CHEBI:18420"/>
    </cofactor>
    <text evidence="1">Binds two Mg(2+) per subunit. The active form of the enzyme binds two Mg(2+) ions in its active site. The first Mg(2+) forms only one salt bridge with the protein.</text>
</comment>
<comment type="subunit">
    <text evidence="1">Homodimer.</text>
</comment>
<comment type="similarity">
    <text evidence="1">Belongs to the RNase T family.</text>
</comment>
<evidence type="ECO:0000255" key="1">
    <source>
        <dbReference type="HAMAP-Rule" id="MF_00157"/>
    </source>
</evidence>
<organism>
    <name type="scientific">Xanthomonas euvesicatoria pv. vesicatoria (strain 85-10)</name>
    <name type="common">Xanthomonas campestris pv. vesicatoria</name>
    <dbReference type="NCBI Taxonomy" id="316273"/>
    <lineage>
        <taxon>Bacteria</taxon>
        <taxon>Pseudomonadati</taxon>
        <taxon>Pseudomonadota</taxon>
        <taxon>Gammaproteobacteria</taxon>
        <taxon>Lysobacterales</taxon>
        <taxon>Lysobacteraceae</taxon>
        <taxon>Xanthomonas</taxon>
    </lineage>
</organism>
<accession>Q3BV71</accession>
<keyword id="KW-0269">Exonuclease</keyword>
<keyword id="KW-0378">Hydrolase</keyword>
<keyword id="KW-0460">Magnesium</keyword>
<keyword id="KW-0479">Metal-binding</keyword>
<keyword id="KW-0540">Nuclease</keyword>
<keyword id="KW-0819">tRNA processing</keyword>
<proteinExistence type="inferred from homology"/>
<feature type="chain" id="PRO_1000011426" description="Ribonuclease T">
    <location>
        <begin position="1"/>
        <end position="213"/>
    </location>
</feature>
<feature type="domain" description="Exonuclease" evidence="1">
    <location>
        <begin position="28"/>
        <end position="202"/>
    </location>
</feature>
<feature type="active site" description="Proton donor/acceptor" evidence="1">
    <location>
        <position position="189"/>
    </location>
</feature>
<feature type="binding site" evidence="1">
    <location>
        <position position="31"/>
    </location>
    <ligand>
        <name>Mg(2+)</name>
        <dbReference type="ChEBI" id="CHEBI:18420"/>
        <label>1</label>
        <note>catalytic</note>
    </ligand>
</feature>
<feature type="binding site" evidence="1">
    <location>
        <position position="31"/>
    </location>
    <ligand>
        <name>Mg(2+)</name>
        <dbReference type="ChEBI" id="CHEBI:18420"/>
        <label>2</label>
        <note>catalytic</note>
    </ligand>
</feature>
<feature type="binding site" evidence="1">
    <location>
        <position position="33"/>
    </location>
    <ligand>
        <name>Mg(2+)</name>
        <dbReference type="ChEBI" id="CHEBI:18420"/>
        <label>2</label>
        <note>catalytic</note>
    </ligand>
</feature>
<feature type="binding site" evidence="1">
    <location>
        <position position="189"/>
    </location>
    <ligand>
        <name>Mg(2+)</name>
        <dbReference type="ChEBI" id="CHEBI:18420"/>
        <label>2</label>
        <note>catalytic</note>
    </ligand>
</feature>
<feature type="binding site" evidence="1">
    <location>
        <position position="194"/>
    </location>
    <ligand>
        <name>Mg(2+)</name>
        <dbReference type="ChEBI" id="CHEBI:18420"/>
        <label>2</label>
        <note>catalytic</note>
    </ligand>
</feature>
<feature type="site" description="Important for substrate binding and specificity" evidence="1">
    <location>
        <position position="37"/>
    </location>
</feature>
<feature type="site" description="Important for substrate binding and specificity" evidence="1">
    <location>
        <position position="132"/>
    </location>
</feature>
<feature type="site" description="Important for substrate binding and specificity" evidence="1">
    <location>
        <position position="154"/>
    </location>
</feature>
<sequence length="213" mass="23287">MRMNEPVDAQPAPSFLPMSRRFRGYLPVVVDVETGGFDWNKHALLEIACVPIEMDTDGRFFPGETASAHLVPAPGLEIDPKSLEITGIVLDHPFRFAKQEKDALDHVFAPVRAAVKKYGCQRAILVGHNAHFDLNFLNAAVARVGHKRNPFHPFSVFDTVTLAGVAYGQTVLARAAQAAGLDWNAADAHSAVYDTEQTARLFCKIANAWPGPV</sequence>